<organism>
    <name type="scientific">Thermococcus onnurineus (strain NA1)</name>
    <dbReference type="NCBI Taxonomy" id="523850"/>
    <lineage>
        <taxon>Archaea</taxon>
        <taxon>Methanobacteriati</taxon>
        <taxon>Methanobacteriota</taxon>
        <taxon>Thermococci</taxon>
        <taxon>Thermococcales</taxon>
        <taxon>Thermococcaceae</taxon>
        <taxon>Thermococcus</taxon>
    </lineage>
</organism>
<reference key="1">
    <citation type="journal article" date="2008" name="J. Bacteriol.">
        <title>The complete genome sequence of Thermococcus onnurineus NA1 reveals a mixed heterotrophic and carboxydotrophic metabolism.</title>
        <authorList>
            <person name="Lee H.S."/>
            <person name="Kang S.G."/>
            <person name="Bae S.S."/>
            <person name="Lim J.K."/>
            <person name="Cho Y."/>
            <person name="Kim Y.J."/>
            <person name="Jeon J.H."/>
            <person name="Cha S.-S."/>
            <person name="Kwon K.K."/>
            <person name="Kim H.-T."/>
            <person name="Park C.-J."/>
            <person name="Lee H.-W."/>
            <person name="Kim S.I."/>
            <person name="Chun J."/>
            <person name="Colwell R.R."/>
            <person name="Kim S.-J."/>
            <person name="Lee J.-H."/>
        </authorList>
    </citation>
    <scope>NUCLEOTIDE SEQUENCE [LARGE SCALE GENOMIC DNA]</scope>
    <source>
        <strain>NA1</strain>
    </source>
</reference>
<name>RS3_THEON</name>
<feature type="chain" id="PRO_1000165519" description="Small ribosomal subunit protein uS3">
    <location>
        <begin position="1"/>
        <end position="208"/>
    </location>
</feature>
<feature type="domain" description="KH type-2" evidence="1">
    <location>
        <begin position="17"/>
        <end position="86"/>
    </location>
</feature>
<sequence length="208" mass="23335">MAIERYFIKEGVREMLIDEYLEKELRRAGYGGIDIKKTPLGTKVIIFAANPGYVIGRGGRRIRELTRILERQFGLENPQIEVEEIKNPYLNAKVQAVRLAQALERGVHFRRAAYAAIRAIMRNGARGVEIRISGKLTGERAKSVRFYQGYLAKVGNPAETLVSKGYAQALLKLGVIGVKVSIMPPDAKLPDEIEVIEKPIQEEEVSEE</sequence>
<dbReference type="EMBL" id="CP000855">
    <property type="protein sequence ID" value="ACJ15556.1"/>
    <property type="molecule type" value="Genomic_DNA"/>
</dbReference>
<dbReference type="RefSeq" id="WP_012571029.1">
    <property type="nucleotide sequence ID" value="NC_011529.1"/>
</dbReference>
<dbReference type="SMR" id="B6YSL9"/>
<dbReference type="STRING" id="523850.TON_0072"/>
<dbReference type="GeneID" id="7017718"/>
<dbReference type="KEGG" id="ton:TON_0072"/>
<dbReference type="PATRIC" id="fig|523850.10.peg.72"/>
<dbReference type="eggNOG" id="arCOG04097">
    <property type="taxonomic scope" value="Archaea"/>
</dbReference>
<dbReference type="HOGENOM" id="CLU_058591_1_1_2"/>
<dbReference type="OrthoDB" id="9126at2157"/>
<dbReference type="Proteomes" id="UP000002727">
    <property type="component" value="Chromosome"/>
</dbReference>
<dbReference type="GO" id="GO:0022627">
    <property type="term" value="C:cytosolic small ribosomal subunit"/>
    <property type="evidence" value="ECO:0007669"/>
    <property type="project" value="TreeGrafter"/>
</dbReference>
<dbReference type="GO" id="GO:0019843">
    <property type="term" value="F:rRNA binding"/>
    <property type="evidence" value="ECO:0007669"/>
    <property type="project" value="UniProtKB-UniRule"/>
</dbReference>
<dbReference type="GO" id="GO:0003735">
    <property type="term" value="F:structural constituent of ribosome"/>
    <property type="evidence" value="ECO:0007669"/>
    <property type="project" value="InterPro"/>
</dbReference>
<dbReference type="GO" id="GO:0006412">
    <property type="term" value="P:translation"/>
    <property type="evidence" value="ECO:0007669"/>
    <property type="project" value="UniProtKB-UniRule"/>
</dbReference>
<dbReference type="CDD" id="cd02411">
    <property type="entry name" value="KH-II_30S_S3_arch"/>
    <property type="match status" value="1"/>
</dbReference>
<dbReference type="FunFam" id="3.30.1140.32:FF:000012">
    <property type="entry name" value="30S ribosomal protein S3"/>
    <property type="match status" value="1"/>
</dbReference>
<dbReference type="FunFam" id="3.30.300.20:FF:000001">
    <property type="entry name" value="30S ribosomal protein S3"/>
    <property type="match status" value="1"/>
</dbReference>
<dbReference type="Gene3D" id="3.30.300.20">
    <property type="match status" value="1"/>
</dbReference>
<dbReference type="Gene3D" id="3.30.1140.32">
    <property type="entry name" value="Ribosomal protein S3, C-terminal domain"/>
    <property type="match status" value="1"/>
</dbReference>
<dbReference type="HAMAP" id="MF_01309_A">
    <property type="entry name" value="Ribosomal_uS3_A"/>
    <property type="match status" value="1"/>
</dbReference>
<dbReference type="InterPro" id="IPR004087">
    <property type="entry name" value="KH_dom"/>
</dbReference>
<dbReference type="InterPro" id="IPR015946">
    <property type="entry name" value="KH_dom-like_a/b"/>
</dbReference>
<dbReference type="InterPro" id="IPR004044">
    <property type="entry name" value="KH_dom_type_2"/>
</dbReference>
<dbReference type="InterPro" id="IPR009019">
    <property type="entry name" value="KH_sf_prok-type"/>
</dbReference>
<dbReference type="InterPro" id="IPR036419">
    <property type="entry name" value="Ribosomal_S3_C_sf"/>
</dbReference>
<dbReference type="InterPro" id="IPR027488">
    <property type="entry name" value="Ribosomal_uS3_arc"/>
</dbReference>
<dbReference type="InterPro" id="IPR001351">
    <property type="entry name" value="Ribosomal_uS3_C"/>
</dbReference>
<dbReference type="InterPro" id="IPR005703">
    <property type="entry name" value="Ribosomal_uS3_euk/arc"/>
</dbReference>
<dbReference type="NCBIfam" id="NF003219">
    <property type="entry name" value="PRK04191.1"/>
    <property type="match status" value="1"/>
</dbReference>
<dbReference type="NCBIfam" id="TIGR01008">
    <property type="entry name" value="uS3_euk_arch"/>
    <property type="match status" value="1"/>
</dbReference>
<dbReference type="PANTHER" id="PTHR11760">
    <property type="entry name" value="30S/40S RIBOSOMAL PROTEIN S3"/>
    <property type="match status" value="1"/>
</dbReference>
<dbReference type="PANTHER" id="PTHR11760:SF32">
    <property type="entry name" value="SMALL RIBOSOMAL SUBUNIT PROTEIN US3"/>
    <property type="match status" value="1"/>
</dbReference>
<dbReference type="Pfam" id="PF07650">
    <property type="entry name" value="KH_2"/>
    <property type="match status" value="1"/>
</dbReference>
<dbReference type="Pfam" id="PF00189">
    <property type="entry name" value="Ribosomal_S3_C"/>
    <property type="match status" value="1"/>
</dbReference>
<dbReference type="SMART" id="SM00322">
    <property type="entry name" value="KH"/>
    <property type="match status" value="1"/>
</dbReference>
<dbReference type="SUPFAM" id="SSF54814">
    <property type="entry name" value="Prokaryotic type KH domain (KH-domain type II)"/>
    <property type="match status" value="1"/>
</dbReference>
<dbReference type="SUPFAM" id="SSF54821">
    <property type="entry name" value="Ribosomal protein S3 C-terminal domain"/>
    <property type="match status" value="1"/>
</dbReference>
<dbReference type="PROSITE" id="PS50823">
    <property type="entry name" value="KH_TYPE_2"/>
    <property type="match status" value="1"/>
</dbReference>
<accession>B6YSL9</accession>
<proteinExistence type="inferred from homology"/>
<gene>
    <name evidence="1" type="primary">rps3</name>
    <name type="ordered locus">TON_0072</name>
</gene>
<evidence type="ECO:0000255" key="1">
    <source>
        <dbReference type="HAMAP-Rule" id="MF_01309"/>
    </source>
</evidence>
<evidence type="ECO:0000305" key="2"/>
<keyword id="KW-0687">Ribonucleoprotein</keyword>
<keyword id="KW-0689">Ribosomal protein</keyword>
<keyword id="KW-0694">RNA-binding</keyword>
<keyword id="KW-0699">rRNA-binding</keyword>
<protein>
    <recommendedName>
        <fullName evidence="1">Small ribosomal subunit protein uS3</fullName>
    </recommendedName>
    <alternativeName>
        <fullName evidence="2">30S ribosomal protein S3</fullName>
    </alternativeName>
</protein>
<comment type="function">
    <text evidence="1">Binds the lower part of the 30S subunit head.</text>
</comment>
<comment type="subunit">
    <text evidence="1">Part of the 30S ribosomal subunit.</text>
</comment>
<comment type="similarity">
    <text evidence="1">Belongs to the universal ribosomal protein uS3 family.</text>
</comment>